<proteinExistence type="inferred from homology"/>
<organism>
    <name type="scientific">Streptococcus pneumoniae (strain Hungary19A-6)</name>
    <dbReference type="NCBI Taxonomy" id="487214"/>
    <lineage>
        <taxon>Bacteria</taxon>
        <taxon>Bacillati</taxon>
        <taxon>Bacillota</taxon>
        <taxon>Bacilli</taxon>
        <taxon>Lactobacillales</taxon>
        <taxon>Streptococcaceae</taxon>
        <taxon>Streptococcus</taxon>
    </lineage>
</organism>
<reference key="1">
    <citation type="journal article" date="2010" name="Genome Biol.">
        <title>Structure and dynamics of the pan-genome of Streptococcus pneumoniae and closely related species.</title>
        <authorList>
            <person name="Donati C."/>
            <person name="Hiller N.L."/>
            <person name="Tettelin H."/>
            <person name="Muzzi A."/>
            <person name="Croucher N.J."/>
            <person name="Angiuoli S.V."/>
            <person name="Oggioni M."/>
            <person name="Dunning Hotopp J.C."/>
            <person name="Hu F.Z."/>
            <person name="Riley D.R."/>
            <person name="Covacci A."/>
            <person name="Mitchell T.J."/>
            <person name="Bentley S.D."/>
            <person name="Kilian M."/>
            <person name="Ehrlich G.D."/>
            <person name="Rappuoli R."/>
            <person name="Moxon E.R."/>
            <person name="Masignani V."/>
        </authorList>
    </citation>
    <scope>NUCLEOTIDE SEQUENCE [LARGE SCALE GENOMIC DNA]</scope>
    <source>
        <strain>Hungary19A-6</strain>
    </source>
</reference>
<feature type="chain" id="PRO_1000143178" description="Small ribosomal subunit protein uS15">
    <location>
        <begin position="1"/>
        <end position="89"/>
    </location>
</feature>
<comment type="function">
    <text evidence="1">One of the primary rRNA binding proteins, it binds directly to 16S rRNA where it helps nucleate assembly of the platform of the 30S subunit by binding and bridging several RNA helices of the 16S rRNA.</text>
</comment>
<comment type="function">
    <text evidence="1">Forms an intersubunit bridge (bridge B4) with the 23S rRNA of the 50S subunit in the ribosome.</text>
</comment>
<comment type="subunit">
    <text evidence="1">Part of the 30S ribosomal subunit. Forms a bridge to the 50S subunit in the 70S ribosome, contacting the 23S rRNA.</text>
</comment>
<comment type="similarity">
    <text evidence="1">Belongs to the universal ribosomal protein uS15 family.</text>
</comment>
<name>RS15_STRPI</name>
<dbReference type="EMBL" id="CP000936">
    <property type="protein sequence ID" value="ACA36457.1"/>
    <property type="molecule type" value="Genomic_DNA"/>
</dbReference>
<dbReference type="RefSeq" id="WP_001018251.1">
    <property type="nucleotide sequence ID" value="NC_010380.1"/>
</dbReference>
<dbReference type="SMR" id="B1I700"/>
<dbReference type="GeneID" id="93847676"/>
<dbReference type="KEGG" id="spv:SPH_1739"/>
<dbReference type="HOGENOM" id="CLU_148518_0_0_9"/>
<dbReference type="Proteomes" id="UP000002163">
    <property type="component" value="Chromosome"/>
</dbReference>
<dbReference type="GO" id="GO:0022627">
    <property type="term" value="C:cytosolic small ribosomal subunit"/>
    <property type="evidence" value="ECO:0007669"/>
    <property type="project" value="TreeGrafter"/>
</dbReference>
<dbReference type="GO" id="GO:0019843">
    <property type="term" value="F:rRNA binding"/>
    <property type="evidence" value="ECO:0007669"/>
    <property type="project" value="UniProtKB-UniRule"/>
</dbReference>
<dbReference type="GO" id="GO:0003735">
    <property type="term" value="F:structural constituent of ribosome"/>
    <property type="evidence" value="ECO:0007669"/>
    <property type="project" value="InterPro"/>
</dbReference>
<dbReference type="GO" id="GO:0006412">
    <property type="term" value="P:translation"/>
    <property type="evidence" value="ECO:0007669"/>
    <property type="project" value="UniProtKB-UniRule"/>
</dbReference>
<dbReference type="CDD" id="cd00353">
    <property type="entry name" value="Ribosomal_S15p_S13e"/>
    <property type="match status" value="1"/>
</dbReference>
<dbReference type="FunFam" id="1.10.287.10:FF:000002">
    <property type="entry name" value="30S ribosomal protein S15"/>
    <property type="match status" value="1"/>
</dbReference>
<dbReference type="Gene3D" id="6.10.250.3130">
    <property type="match status" value="1"/>
</dbReference>
<dbReference type="Gene3D" id="1.10.287.10">
    <property type="entry name" value="S15/NS1, RNA-binding"/>
    <property type="match status" value="1"/>
</dbReference>
<dbReference type="HAMAP" id="MF_01343_B">
    <property type="entry name" value="Ribosomal_uS15_B"/>
    <property type="match status" value="1"/>
</dbReference>
<dbReference type="InterPro" id="IPR000589">
    <property type="entry name" value="Ribosomal_uS15"/>
</dbReference>
<dbReference type="InterPro" id="IPR005290">
    <property type="entry name" value="Ribosomal_uS15_bac-type"/>
</dbReference>
<dbReference type="InterPro" id="IPR009068">
    <property type="entry name" value="uS15_NS1_RNA-bd_sf"/>
</dbReference>
<dbReference type="NCBIfam" id="TIGR00952">
    <property type="entry name" value="S15_bact"/>
    <property type="match status" value="1"/>
</dbReference>
<dbReference type="PANTHER" id="PTHR23321">
    <property type="entry name" value="RIBOSOMAL PROTEIN S15, BACTERIAL AND ORGANELLAR"/>
    <property type="match status" value="1"/>
</dbReference>
<dbReference type="PANTHER" id="PTHR23321:SF26">
    <property type="entry name" value="SMALL RIBOSOMAL SUBUNIT PROTEIN US15M"/>
    <property type="match status" value="1"/>
</dbReference>
<dbReference type="Pfam" id="PF00312">
    <property type="entry name" value="Ribosomal_S15"/>
    <property type="match status" value="1"/>
</dbReference>
<dbReference type="SMART" id="SM01387">
    <property type="entry name" value="Ribosomal_S15"/>
    <property type="match status" value="1"/>
</dbReference>
<dbReference type="SUPFAM" id="SSF47060">
    <property type="entry name" value="S15/NS1 RNA-binding domain"/>
    <property type="match status" value="1"/>
</dbReference>
<dbReference type="PROSITE" id="PS00362">
    <property type="entry name" value="RIBOSOMAL_S15"/>
    <property type="match status" value="1"/>
</dbReference>
<protein>
    <recommendedName>
        <fullName evidence="1">Small ribosomal subunit protein uS15</fullName>
    </recommendedName>
    <alternativeName>
        <fullName evidence="2">30S ribosomal protein S15</fullName>
    </alternativeName>
</protein>
<accession>B1I700</accession>
<evidence type="ECO:0000255" key="1">
    <source>
        <dbReference type="HAMAP-Rule" id="MF_01343"/>
    </source>
</evidence>
<evidence type="ECO:0000305" key="2"/>
<gene>
    <name evidence="1" type="primary">rpsO</name>
    <name type="ordered locus">SPH_1739</name>
</gene>
<sequence>MAISKEKKNEIIAQYARHEGDTGSVEVQVAVLTWEINHLNEHIKQHKKDHATYRGLMKKIGRRRNLLAYLRKNDVNRYRELINSLGLRR</sequence>
<keyword id="KW-0687">Ribonucleoprotein</keyword>
<keyword id="KW-0689">Ribosomal protein</keyword>
<keyword id="KW-0694">RNA-binding</keyword>
<keyword id="KW-0699">rRNA-binding</keyword>